<evidence type="ECO:0000250" key="1"/>
<evidence type="ECO:0000250" key="2">
    <source>
        <dbReference type="UniProtKB" id="P22366"/>
    </source>
</evidence>
<evidence type="ECO:0000250" key="3">
    <source>
        <dbReference type="UniProtKB" id="Q99836"/>
    </source>
</evidence>
<evidence type="ECO:0000255" key="4">
    <source>
        <dbReference type="PROSITE-ProRule" id="PRU00064"/>
    </source>
</evidence>
<evidence type="ECO:0000255" key="5">
    <source>
        <dbReference type="PROSITE-ProRule" id="PRU00204"/>
    </source>
</evidence>
<keyword id="KW-0963">Cytoplasm</keyword>
<keyword id="KW-0391">Immunity</keyword>
<keyword id="KW-0395">Inflammatory response</keyword>
<keyword id="KW-0399">Innate immunity</keyword>
<keyword id="KW-0539">Nucleus</keyword>
<keyword id="KW-0597">Phosphoprotein</keyword>
<keyword id="KW-1185">Reference proteome</keyword>
<keyword id="KW-0832">Ubl conjugation</keyword>
<proteinExistence type="evidence at transcript level"/>
<dbReference type="EMBL" id="AB446473">
    <property type="protein sequence ID" value="BAG55250.1"/>
    <property type="molecule type" value="mRNA"/>
</dbReference>
<dbReference type="RefSeq" id="NP_001266529.1">
    <property type="nucleotide sequence ID" value="NM_001279600.1"/>
</dbReference>
<dbReference type="BMRB" id="B3Y680"/>
<dbReference type="SMR" id="B3Y680"/>
<dbReference type="FunCoup" id="B3Y680">
    <property type="interactions" value="1590"/>
</dbReference>
<dbReference type="STRING" id="9593.ENSGGOP00000003761"/>
<dbReference type="GeneID" id="101141837"/>
<dbReference type="KEGG" id="ggo:101141837"/>
<dbReference type="CTD" id="4615"/>
<dbReference type="eggNOG" id="ENOG502QWKI">
    <property type="taxonomic scope" value="Eukaryota"/>
</dbReference>
<dbReference type="HOGENOM" id="CLU_045884_0_0_1"/>
<dbReference type="InParanoid" id="B3Y680"/>
<dbReference type="Proteomes" id="UP000001519">
    <property type="component" value="Unplaced"/>
</dbReference>
<dbReference type="GO" id="GO:0005737">
    <property type="term" value="C:cytoplasm"/>
    <property type="evidence" value="ECO:0007669"/>
    <property type="project" value="UniProtKB-SubCell"/>
</dbReference>
<dbReference type="GO" id="GO:0005634">
    <property type="term" value="C:nucleus"/>
    <property type="evidence" value="ECO:0007669"/>
    <property type="project" value="UniProtKB-SubCell"/>
</dbReference>
<dbReference type="GO" id="GO:0005886">
    <property type="term" value="C:plasma membrane"/>
    <property type="evidence" value="ECO:0000318"/>
    <property type="project" value="GO_Central"/>
</dbReference>
<dbReference type="GO" id="GO:0070976">
    <property type="term" value="F:TIR domain binding"/>
    <property type="evidence" value="ECO:0007669"/>
    <property type="project" value="InterPro"/>
</dbReference>
<dbReference type="GO" id="GO:0035325">
    <property type="term" value="F:Toll-like receptor binding"/>
    <property type="evidence" value="ECO:0000318"/>
    <property type="project" value="GO_Central"/>
</dbReference>
<dbReference type="GO" id="GO:0050830">
    <property type="term" value="P:defense response to Gram-positive bacterium"/>
    <property type="evidence" value="ECO:0000250"/>
    <property type="project" value="UniProtKB"/>
</dbReference>
<dbReference type="GO" id="GO:0051607">
    <property type="term" value="P:defense response to virus"/>
    <property type="evidence" value="ECO:0000250"/>
    <property type="project" value="UniProtKB"/>
</dbReference>
<dbReference type="GO" id="GO:0006954">
    <property type="term" value="P:inflammatory response"/>
    <property type="evidence" value="ECO:0007669"/>
    <property type="project" value="UniProtKB-KW"/>
</dbReference>
<dbReference type="GO" id="GO:0045087">
    <property type="term" value="P:innate immune response"/>
    <property type="evidence" value="ECO:0000318"/>
    <property type="project" value="GO_Central"/>
</dbReference>
<dbReference type="GO" id="GO:0002755">
    <property type="term" value="P:MyD88-dependent toll-like receptor signaling pathway"/>
    <property type="evidence" value="ECO:0007669"/>
    <property type="project" value="InterPro"/>
</dbReference>
<dbReference type="GO" id="GO:0043123">
    <property type="term" value="P:positive regulation of canonical NF-kappaB signal transduction"/>
    <property type="evidence" value="ECO:0007669"/>
    <property type="project" value="InterPro"/>
</dbReference>
<dbReference type="GO" id="GO:0032731">
    <property type="term" value="P:positive regulation of interleukin-1 beta production"/>
    <property type="evidence" value="ECO:0000250"/>
    <property type="project" value="UniProtKB"/>
</dbReference>
<dbReference type="GO" id="GO:1900227">
    <property type="term" value="P:positive regulation of NLRP3 inflammasome complex assembly"/>
    <property type="evidence" value="ECO:0000250"/>
    <property type="project" value="UniProtKB"/>
</dbReference>
<dbReference type="GO" id="GO:0008063">
    <property type="term" value="P:Toll signaling pathway"/>
    <property type="evidence" value="ECO:0000318"/>
    <property type="project" value="GO_Central"/>
</dbReference>
<dbReference type="GO" id="GO:0034142">
    <property type="term" value="P:toll-like receptor 4 signaling pathway"/>
    <property type="evidence" value="ECO:0000318"/>
    <property type="project" value="GO_Central"/>
</dbReference>
<dbReference type="GO" id="GO:0034158">
    <property type="term" value="P:toll-like receptor 8 signaling pathway"/>
    <property type="evidence" value="ECO:0000250"/>
    <property type="project" value="UniProtKB"/>
</dbReference>
<dbReference type="CDD" id="cd08312">
    <property type="entry name" value="Death_MyD88"/>
    <property type="match status" value="1"/>
</dbReference>
<dbReference type="FunFam" id="1.10.533.10:FF:000029">
    <property type="entry name" value="Myeloid differentiation primary response protein MyD88"/>
    <property type="match status" value="1"/>
</dbReference>
<dbReference type="FunFam" id="3.40.50.10140:FF:000005">
    <property type="entry name" value="Myeloid differentiation primary response protein MyD88"/>
    <property type="match status" value="1"/>
</dbReference>
<dbReference type="Gene3D" id="1.10.533.10">
    <property type="entry name" value="Death Domain, Fas"/>
    <property type="match status" value="1"/>
</dbReference>
<dbReference type="Gene3D" id="3.40.50.10140">
    <property type="entry name" value="Toll/interleukin-1 receptor homology (TIR) domain"/>
    <property type="match status" value="1"/>
</dbReference>
<dbReference type="InterPro" id="IPR011029">
    <property type="entry name" value="DEATH-like_dom_sf"/>
</dbReference>
<dbReference type="InterPro" id="IPR000488">
    <property type="entry name" value="Death_dom"/>
</dbReference>
<dbReference type="InterPro" id="IPR034249">
    <property type="entry name" value="MyD88_Death"/>
</dbReference>
<dbReference type="InterPro" id="IPR017281">
    <property type="entry name" value="Myelin_different_resp_MyD88"/>
</dbReference>
<dbReference type="InterPro" id="IPR000157">
    <property type="entry name" value="TIR_dom"/>
</dbReference>
<dbReference type="InterPro" id="IPR035897">
    <property type="entry name" value="Toll_tir_struct_dom_sf"/>
</dbReference>
<dbReference type="PANTHER" id="PTHR15079">
    <property type="entry name" value="MYD88"/>
    <property type="match status" value="1"/>
</dbReference>
<dbReference type="PANTHER" id="PTHR15079:SF3">
    <property type="entry name" value="MYELOID DIFFERENTIATION PRIMARY RESPONSE PROTEIN MYD88"/>
    <property type="match status" value="1"/>
</dbReference>
<dbReference type="Pfam" id="PF00531">
    <property type="entry name" value="Death"/>
    <property type="match status" value="1"/>
</dbReference>
<dbReference type="Pfam" id="PF13676">
    <property type="entry name" value="TIR_2"/>
    <property type="match status" value="1"/>
</dbReference>
<dbReference type="PIRSF" id="PIRSF037756">
    <property type="entry name" value="MyD88"/>
    <property type="match status" value="1"/>
</dbReference>
<dbReference type="SMART" id="SM00005">
    <property type="entry name" value="DEATH"/>
    <property type="match status" value="1"/>
</dbReference>
<dbReference type="SMART" id="SM00255">
    <property type="entry name" value="TIR"/>
    <property type="match status" value="1"/>
</dbReference>
<dbReference type="SUPFAM" id="SSF47986">
    <property type="entry name" value="DEATH domain"/>
    <property type="match status" value="1"/>
</dbReference>
<dbReference type="SUPFAM" id="SSF52200">
    <property type="entry name" value="Toll/Interleukin receptor TIR domain"/>
    <property type="match status" value="1"/>
</dbReference>
<dbReference type="PROSITE" id="PS50017">
    <property type="entry name" value="DEATH_DOMAIN"/>
    <property type="match status" value="1"/>
</dbReference>
<dbReference type="PROSITE" id="PS50104">
    <property type="entry name" value="TIR"/>
    <property type="match status" value="1"/>
</dbReference>
<protein>
    <recommendedName>
        <fullName>Myeloid differentiation primary response protein MyD88</fullName>
    </recommendedName>
</protein>
<gene>
    <name type="primary">MYD88</name>
</gene>
<organism>
    <name type="scientific">Gorilla gorilla gorilla</name>
    <name type="common">Western lowland gorilla</name>
    <dbReference type="NCBI Taxonomy" id="9595"/>
    <lineage>
        <taxon>Eukaryota</taxon>
        <taxon>Metazoa</taxon>
        <taxon>Chordata</taxon>
        <taxon>Craniata</taxon>
        <taxon>Vertebrata</taxon>
        <taxon>Euteleostomi</taxon>
        <taxon>Mammalia</taxon>
        <taxon>Eutheria</taxon>
        <taxon>Euarchontoglires</taxon>
        <taxon>Primates</taxon>
        <taxon>Haplorrhini</taxon>
        <taxon>Catarrhini</taxon>
        <taxon>Hominidae</taxon>
        <taxon>Gorilla</taxon>
    </lineage>
</organism>
<accession>B3Y680</accession>
<sequence>MAAGGPGAGSAAPVSSTSSLPLAALNMRVRRRLSLFLNVRTQVAADWTALAEEMDFEYLEIRQLETHADPTGRLLDAWQGRPGASVGRLLELLTKLGRDDVLLELGPSIEEDCQKYILKQQQEEAEKPLQVAAVDSSVPRTAELAGITTLDDPLGHMPERFDAFICYCPSDIQFVQEMIRQLEQTNYRLKLCVSDRDVLPGTCVWSIASELIEKRCRRMVVVVSDDYLQSKECDFQTKFALSLSPGAHQKRLIPIKYKAMKKEFPSILRFITVCDYTNPCTKSWFWTRLAKALSLP</sequence>
<name>MYD88_GORGO</name>
<reference key="1">
    <citation type="journal article" date="2008" name="Immunogenetics">
        <title>Natural selection in the TLR-related genes in the course of primate evolution.</title>
        <authorList>
            <person name="Nakajima T."/>
            <person name="Ohtani H."/>
            <person name="Satta Y."/>
            <person name="Uno Y."/>
            <person name="Akari H."/>
            <person name="Ishida T."/>
            <person name="Kimura A."/>
        </authorList>
    </citation>
    <scope>NUCLEOTIDE SEQUENCE [MRNA]</scope>
</reference>
<comment type="function">
    <text evidence="2 3">Adapter protein involved in the Toll-like receptor and IL-1 receptor signaling pathway in the innate immune response. Acts via IRAK1, IRAK2, IRF7 and TRAF6, leading to NF-kappa-B activation, cytokine secretion and the inflammatory response. Increases IL-8 transcription. Involved in IL-18-mediated signaling pathway. Activates IRF1 resulting in its rapid migration into the nucleus to mediate an efficient induction of IFN-beta, NOS2/INOS, and IL12A genes. Upon TLR8 activation by GU-rich single-stranded RNA (GU-rich RNA) derived from viruses, induces IL1B release through NLRP3 inflammasome activation (By similarity). MyD88-mediated signaling in intestinal epithelial cells is crucial for maintenance of gut homeostasis and controls the expression of the antimicrobial lectin REG3G in the small intestine (By similarity).</text>
</comment>
<comment type="subunit">
    <text evidence="3">Homodimer. Also forms heterodimers with TIRAP. Binds to TLR2, TLR4, TLR5, IRAK1, IRAK2 and IRAK4 via their respective TIR domains. Interacts with IL18R1. Interacts with BMX, IL1RL1, IKBKE and IRF7. Interacts with LRRFIP1 and LRRFIP2; this interaction positively regulates Toll-like receptor (TLR) signaling in response to agonist. Interacts with FLII. LRRFIP1 and LRRFIP2 compete with FLII for MYD88-binding. Interacts with IRF1. Upon IL1B treatment, forms a complex with PELI1, IRAK1, IRAK4 and TRAF6; this complex recruits MAP3K7/TAK1, TAB1 and TAB2 to mediate NF-kappa-B activation. Direct binding of SMAD6 to PELI1 prevents the complex formation and hence negatively regulates IL1R-TLR signaling and eventually NF-kappa-B-mediated gene expression. May interact with PIK3AP1. Interacts (via TIR domain) with DHX9 (via H2A and OB-fold regions); this interaction is direct. Interacts with OTUD4 deubiquitinase; the interaction is direct.</text>
</comment>
<comment type="subcellular location">
    <subcellularLocation>
        <location evidence="3">Cytoplasm</location>
    </subcellularLocation>
    <subcellularLocation>
        <location evidence="3">Nucleus</location>
    </subcellularLocation>
</comment>
<comment type="domain">
    <text evidence="2">The intermediate domain (ID) is required for the phosphorylation and activation of IRAK.</text>
</comment>
<comment type="PTM">
    <text evidence="3">Ubiquitinated; undergoes 'Lys-63'-linked polyubiquitination. OTUD4 specifically hydrolyzes 'Lys-63'-linked polyubiquitinated MYD88. Deubiquitinated by USP3 that cleaves 'Lys-63'-linked ubiquitin chains leading to inhibition of MYD88-induced NF-kappa-B signaling.</text>
</comment>
<feature type="chain" id="PRO_0000393131" description="Myeloid differentiation primary response protein MyD88">
    <location>
        <begin position="1"/>
        <end position="296"/>
    </location>
</feature>
<feature type="domain" description="Death" evidence="4">
    <location>
        <begin position="32"/>
        <end position="109"/>
    </location>
</feature>
<feature type="domain" description="TIR" evidence="5">
    <location>
        <begin position="159"/>
        <end position="293"/>
    </location>
</feature>
<feature type="region of interest" description="Intermediate domain" evidence="1">
    <location>
        <begin position="110"/>
        <end position="155"/>
    </location>
</feature>
<feature type="modified residue" description="Phosphoserine" evidence="3">
    <location>
        <position position="244"/>
    </location>
</feature>